<protein>
    <recommendedName>
        <fullName>Androgen receptor</fullName>
    </recommendedName>
    <alternativeName>
        <fullName>Dihydrotestosterone receptor</fullName>
    </alternativeName>
    <alternativeName>
        <fullName>Nuclear receptor subfamily 3 group C member 4</fullName>
    </alternativeName>
</protein>
<proteinExistence type="evidence at protein level"/>
<reference key="1">
    <citation type="journal article" date="1988" name="Mol. Endocrinol.">
        <title>The rat androgen receptor: primary structure, autoregulation of its messenger ribonucleic acid, and immunocytochemical localization of the receptor protein.</title>
        <authorList>
            <person name="Tan J."/>
            <person name="Joseph D.R."/>
            <person name="Quarmby V.E."/>
            <person name="Lubahn D.B."/>
            <person name="Sar M."/>
            <person name="French F.S."/>
            <person name="Wilson E.M."/>
        </authorList>
    </citation>
    <scope>NUCLEOTIDE SEQUENCE [MRNA]</scope>
</reference>
<reference key="2">
    <citation type="journal article" date="1988" name="Proc. Natl. Acad. Sci. U.S.A.">
        <title>Structural analysis of complementary DNA and amino acid sequences of human and rat androgen receptors.</title>
        <authorList>
            <person name="Chang C."/>
            <person name="Kokontis J."/>
            <person name="Liao S."/>
        </authorList>
    </citation>
    <scope>NUCLEOTIDE SEQUENCE [MRNA]</scope>
    <source>
        <tissue>Prostate</tissue>
    </source>
</reference>
<reference key="3">
    <citation type="journal article" date="1990" name="J. Biol. Chem.">
        <title>A single base mutation in the androgen receptor gene causes androgen insensitivity in the testicular feminized rat.</title>
        <authorList>
            <person name="Yarbrough W.G."/>
            <person name="Quarmby V.E."/>
            <person name="Simental J.A."/>
            <person name="Joseph D.R."/>
            <person name="Sar M."/>
            <person name="Lubahn D.B."/>
            <person name="Olsen K.L."/>
            <person name="French F.S."/>
            <person name="Wilson E.M."/>
        </authorList>
    </citation>
    <scope>NUCLEOTIDE SEQUENCE [GENOMIC DNA]</scope>
    <scope>VARIANT TFM GLN-735</scope>
</reference>
<reference key="4">
    <citation type="journal article" date="1998" name="Mol. Biol. Cell">
        <title>Activation of androgen receptor function by a novel nuclear protein kinase.</title>
        <authorList>
            <person name="Moilanen A.-M."/>
            <person name="Karvonen U."/>
            <person name="Poukka H."/>
            <person name="Jaenne O.A."/>
            <person name="Palvimo J.J."/>
        </authorList>
    </citation>
    <scope>INTERACTION WITH HIPK3</scope>
    <scope>SUBCELLULAR LOCATION</scope>
    <source>
        <tissue>Testis</tissue>
    </source>
</reference>
<reference key="5">
    <citation type="journal article" date="2003" name="Biochem. J.">
        <title>A novel steroid receptor co-activator protein (SRAP) as an alternative form of steroid receptor RNA-activator gene: expression in prostate cancer cells and enhancement of androgen receptor activity.</title>
        <authorList>
            <person name="Kawashima H."/>
            <person name="Takano H."/>
            <person name="Sugita S."/>
            <person name="Takahara Y."/>
            <person name="Sugimura K."/>
            <person name="Nakatani T."/>
        </authorList>
    </citation>
    <scope>INTERACTION WITH SRA1</scope>
</reference>
<reference key="6">
    <citation type="journal article" date="2012" name="Nat. Commun.">
        <title>Quantitative maps of protein phosphorylation sites across 14 different rat organs and tissues.</title>
        <authorList>
            <person name="Lundby A."/>
            <person name="Secher A."/>
            <person name="Lage K."/>
            <person name="Nordsborg N.B."/>
            <person name="Dmytriyev A."/>
            <person name="Lundby C."/>
            <person name="Olsen J.V."/>
        </authorList>
    </citation>
    <scope>PHOSPHORYLATION [LARGE SCALE ANALYSIS] AT SER-290 AND SER-633</scope>
    <scope>IDENTIFICATION BY MASS SPECTROMETRY [LARGE SCALE ANALYSIS]</scope>
</reference>
<reference key="7">
    <citation type="journal article" date="2001" name="Proc. Natl. Acad. Sci. U.S.A.">
        <title>Crystallographic structures of the ligand-binding domains of the androgen receptor and its T877A mutant complexed with the natural agonist dihydrotestosterone.</title>
        <authorList>
            <person name="Sack J.S."/>
            <person name="Kish K.F."/>
            <person name="Wang C."/>
            <person name="Attar R.M."/>
            <person name="Kiefer S.E."/>
            <person name="An Y."/>
            <person name="Wu G.Y."/>
            <person name="Scheffler J.E."/>
            <person name="Salvati M.E."/>
            <person name="Krystek S.R. Jr."/>
            <person name="Weinmann R."/>
            <person name="Einspahr H.M."/>
        </authorList>
    </citation>
    <scope>X-RAY CRYSTALLOGRAPHY (2.0 ANGSTROMS) OF 647-902 OF MUTANT ALA-860 IN COMPLEX WITH DIHYDROTESTOSTERONE</scope>
</reference>
<reference key="8">
    <citation type="journal article" date="2004" name="Proc. Natl. Acad. Sci. U.S.A.">
        <title>Structural basis of androgen receptor binding to selective androgen response elements.</title>
        <authorList>
            <person name="Shaffer P.L."/>
            <person name="Jivan A."/>
            <person name="Dollins D.E."/>
            <person name="Claessens F."/>
            <person name="Gewirth D.T."/>
        </authorList>
    </citation>
    <scope>X-RAY CRYSTALLOGRAPHY (3.1 ANGSTROMS) OF 533-637 IN COMPLEX WITH DNA AND ZINC IONS</scope>
    <scope>SUBUNIT</scope>
</reference>
<reference key="9">
    <citation type="journal article" date="2005" name="Bioorg. Med. Chem. Lett.">
        <title>Structure based approach to the design of bicyclic-1H-isoindole-1,3(2H)-dione based androgen receptor antagonists.</title>
        <authorList>
            <person name="Salvati M.E."/>
            <person name="Balog A."/>
            <person name="Shan W."/>
            <person name="Wei D.D."/>
            <person name="Pickering D."/>
            <person name="Attar R.M."/>
            <person name="Geng J."/>
            <person name="Rizzo C.A."/>
            <person name="Gottardis M.M."/>
            <person name="Weinmann R."/>
            <person name="Krystek S.R."/>
            <person name="Sack J."/>
            <person name="An Y."/>
            <person name="Kish K."/>
        </authorList>
    </citation>
    <scope>X-RAY CRYSTALLOGRAPHY (2.2 ANGSTROMS) OF 647-902 OF MUTANT ALA-860 IN COMPLEX WITH SYNTHETIC ANTAGONIST</scope>
</reference>
<reference key="10">
    <citation type="journal article" date="2006" name="J. Med. Chem.">
        <title>Discovery of potent, orally-active, and muscle-selective androgen receptor modulators based on an N-aryl-hydroxybicyclohydantoin scaffold.</title>
        <authorList>
            <person name="Sun C."/>
            <person name="Robl J.A."/>
            <person name="Wang T.C."/>
            <person name="Huang Y."/>
            <person name="Kuhns J.E."/>
            <person name="Lupisella J.A."/>
            <person name="Beehler B.C."/>
            <person name="Golla R."/>
            <person name="Sleph P.G."/>
            <person name="Seethala R."/>
            <person name="Fura A."/>
            <person name="Krystek S.R. Jr."/>
            <person name="An Y."/>
            <person name="Malley M.F."/>
            <person name="Sack J.S."/>
            <person name="Salvati M.E."/>
            <person name="Grover G.J."/>
            <person name="Ostrowski J."/>
            <person name="Hamann L.G."/>
        </authorList>
    </citation>
    <scope>X-RAY CRYSTALLOGRAPHY (2.0 ANGSTROMS) OF 647-902 IN COMPLEX WITH SYNTHETIC ANDROGEN ANTAGONIST</scope>
    <scope>FUNCTION</scope>
</reference>
<reference key="11">
    <citation type="journal article" date="2007" name="Endocrinology">
        <title>Pharmacological and X-ray structural characterization of a novel selective androgen receptor modulator: potent hyperanabolic stimulation of skeletal muscle with hypostimulation of prostate in rats.</title>
        <authorList>
            <person name="Ostrowski J."/>
            <person name="Kuhns J.E."/>
            <person name="Lupisella J.A."/>
            <person name="Manfredi M.C."/>
            <person name="Beehler B.C."/>
            <person name="Krystek S.R. Jr."/>
            <person name="Bi Y."/>
            <person name="Sun C."/>
            <person name="Seethala R."/>
            <person name="Golla R."/>
            <person name="Sleph P.G."/>
            <person name="Fura A."/>
            <person name="An Y."/>
            <person name="Kish K.F."/>
            <person name="Sack J.S."/>
            <person name="Mookhtiar K.A."/>
            <person name="Grover G.J."/>
            <person name="Hamann L.G."/>
        </authorList>
    </citation>
    <scope>X-RAY CRYSTALLOGRAPHY (3.0 ANGSTROMS) OF 647-902 IN COMPLEX WITH THE SYNTHETIC AGONIST MBS-564929</scope>
    <scope>FUNCTION</scope>
</reference>
<feature type="chain" id="PRO_0000053712" description="Androgen receptor">
    <location>
        <begin position="1"/>
        <end position="902"/>
    </location>
</feature>
<feature type="domain" description="NR LBD" evidence="5">
    <location>
        <begin position="651"/>
        <end position="882"/>
    </location>
</feature>
<feature type="DNA-binding region" description="Nuclear receptor" evidence="4">
    <location>
        <begin position="541"/>
        <end position="614"/>
    </location>
</feature>
<feature type="zinc finger region" description="NR C4-type" evidence="4">
    <location>
        <begin position="542"/>
        <end position="562"/>
    </location>
</feature>
<feature type="zinc finger region" description="NR C4-type" evidence="4">
    <location>
        <begin position="578"/>
        <end position="602"/>
    </location>
</feature>
<feature type="region of interest" description="Interaction with ZNF318" evidence="3">
    <location>
        <begin position="1"/>
        <end position="569"/>
    </location>
</feature>
<feature type="region of interest" description="Modulating">
    <location>
        <begin position="1"/>
        <end position="540"/>
    </location>
</feature>
<feature type="region of interest" description="Disordered" evidence="6">
    <location>
        <begin position="35"/>
        <end position="146"/>
    </location>
</feature>
<feature type="region of interest" description="Disordered" evidence="6">
    <location>
        <begin position="194"/>
        <end position="224"/>
    </location>
</feature>
<feature type="region of interest" description="Disordered" evidence="6">
    <location>
        <begin position="439"/>
        <end position="465"/>
    </location>
</feature>
<feature type="region of interest" description="Interaction with LPXN" evidence="2">
    <location>
        <begin position="534"/>
        <end position="901"/>
    </location>
</feature>
<feature type="region of interest" description="Interaction with HIPK3" evidence="14">
    <location>
        <begin position="554"/>
        <end position="644"/>
    </location>
</feature>
<feature type="region of interest" description="Interaction with CCAR1" evidence="2">
    <location>
        <begin position="574"/>
        <end position="901"/>
    </location>
</feature>
<feature type="region of interest" description="Interaction with KAT7" evidence="2">
    <location>
        <begin position="607"/>
        <end position="901"/>
    </location>
</feature>
<feature type="compositionally biased region" description="Low complexity" evidence="6">
    <location>
        <begin position="94"/>
        <end position="103"/>
    </location>
</feature>
<feature type="compositionally biased region" description="Polar residues" evidence="6">
    <location>
        <begin position="196"/>
        <end position="205"/>
    </location>
</feature>
<feature type="compositionally biased region" description="Polar residues" evidence="6">
    <location>
        <begin position="213"/>
        <end position="224"/>
    </location>
</feature>
<feature type="binding site" evidence="7 16">
    <location>
        <position position="688"/>
    </location>
    <ligand>
        <name>17beta-hydroxy-5alpha-androstan-3-one</name>
        <dbReference type="ChEBI" id="CHEBI:16330"/>
    </ligand>
</feature>
<feature type="binding site" evidence="7 16">
    <location>
        <position position="735"/>
    </location>
    <ligand>
        <name>17beta-hydroxy-5alpha-androstan-3-one</name>
        <dbReference type="ChEBI" id="CHEBI:16330"/>
    </ligand>
</feature>
<feature type="binding site" evidence="7 16">
    <location>
        <position position="860"/>
    </location>
    <ligand>
        <name>17beta-hydroxy-5alpha-androstan-3-one</name>
        <dbReference type="ChEBI" id="CHEBI:16330"/>
    </ligand>
</feature>
<feature type="site" description="Interaction with coactivator LXXL and FXXFY motifs" evidence="2">
    <location>
        <position position="703"/>
    </location>
</feature>
<feature type="site" description="Interaction with coactivator FXXLF and FXXFY motifs" evidence="2">
    <location>
        <position position="880"/>
    </location>
</feature>
<feature type="modified residue" description="Phosphoserine; by CDK9" evidence="2">
    <location>
        <position position="61"/>
    </location>
</feature>
<feature type="modified residue" description="Phosphoserine" evidence="2">
    <location>
        <position position="75"/>
    </location>
</feature>
<feature type="modified residue" description="Phosphotyrosine; by CSK" evidence="2">
    <location>
        <position position="221"/>
    </location>
</feature>
<feature type="modified residue" description="Phosphoserine" evidence="2">
    <location>
        <position position="254"/>
    </location>
</feature>
<feature type="modified residue" description="Phosphotyrosine; by CSK and TNK2" evidence="2">
    <location>
        <position position="265"/>
    </location>
</feature>
<feature type="modified residue" description="Phosphoserine" evidence="17">
    <location>
        <position position="290"/>
    </location>
</feature>
<feature type="modified residue" description="Phosphotyrosine; by CSK" evidence="2">
    <location>
        <position position="305"/>
    </location>
</feature>
<feature type="modified residue" description="Phosphotyrosine; by CSK" evidence="2">
    <location>
        <position position="344"/>
    </location>
</feature>
<feature type="modified residue" description="Phosphotyrosine; by CSK" evidence="2">
    <location>
        <position position="355"/>
    </location>
</feature>
<feature type="modified residue" description="Phosphotyrosine; by CSK" evidence="2">
    <location>
        <position position="360"/>
    </location>
</feature>
<feature type="modified residue" description="Phosphotyrosine; by CSK and TNK2" evidence="2">
    <location>
        <position position="361"/>
    </location>
</feature>
<feature type="modified residue" description="Phosphotyrosine; by CSK" evidence="2">
    <location>
        <position position="391"/>
    </location>
</feature>
<feature type="modified residue" description="Phosphotyrosine; by CSK" evidence="2">
    <location>
        <position position="517"/>
    </location>
</feature>
<feature type="modified residue" description="Phosphotyrosine; by CSK" evidence="2">
    <location>
        <position position="534"/>
    </location>
</feature>
<feature type="modified residue" description="Phosphoserine" evidence="17">
    <location>
        <position position="633"/>
    </location>
</feature>
<feature type="modified residue" description="Phosphotyrosine; by CSK" evidence="2">
    <location>
        <position position="898"/>
    </location>
</feature>
<feature type="cross-link" description="Glycyl lysine isopeptide (Lys-Gly) (interchain with G-Cter in SUMO)" evidence="1">
    <location>
        <position position="384"/>
    </location>
</feature>
<feature type="cross-link" description="Glycyl lysine isopeptide (Lys-Gly) (interchain with G-Cter in SUMO)" evidence="1">
    <location>
        <position position="503"/>
    </location>
</feature>
<feature type="cross-link" description="Glycyl lysine isopeptide (Lys-Gly) (interchain with G-Cter in ubiquitin)" evidence="2">
    <location>
        <position position="828"/>
    </location>
</feature>
<feature type="cross-link" description="Glycyl lysine isopeptide (Lys-Gly) (interchain with G-Cter in ubiquitin)" evidence="2">
    <location>
        <position position="830"/>
    </location>
</feature>
<feature type="sequence variant" description="In TFM; has only 10-15% of the androgen-binding capacity of wild-type AR." evidence="13">
    <original>R</original>
    <variation>Q</variation>
    <location>
        <position position="735"/>
    </location>
</feature>
<feature type="sequence conflict" description="In Ref. 3; AAA40734." evidence="15" ref="3">
    <location>
        <position position="195"/>
    </location>
</feature>
<feature type="sequence conflict" description="In Ref. 2; AAA40759." evidence="15" ref="2">
    <original>S</original>
    <variation>L</variation>
    <location>
        <position position="389"/>
    </location>
</feature>
<feature type="strand" evidence="19">
    <location>
        <begin position="543"/>
        <end position="545"/>
    </location>
</feature>
<feature type="strand" evidence="19">
    <location>
        <begin position="551"/>
        <end position="553"/>
    </location>
</feature>
<feature type="strand" evidence="19">
    <location>
        <begin position="556"/>
        <end position="558"/>
    </location>
</feature>
<feature type="helix" evidence="19">
    <location>
        <begin position="560"/>
        <end position="570"/>
    </location>
</feature>
<feature type="strand" evidence="19">
    <location>
        <begin position="579"/>
        <end position="582"/>
    </location>
</feature>
<feature type="turn" evidence="19">
    <location>
        <begin position="588"/>
        <end position="593"/>
    </location>
</feature>
<feature type="helix" evidence="19">
    <location>
        <begin position="595"/>
        <end position="605"/>
    </location>
</feature>
<feature type="helix" evidence="22">
    <location>
        <begin position="655"/>
        <end position="663"/>
    </location>
</feature>
<feature type="strand" evidence="18">
    <location>
        <begin position="674"/>
        <end position="676"/>
    </location>
</feature>
<feature type="helix" evidence="22">
    <location>
        <begin position="680"/>
        <end position="703"/>
    </location>
</feature>
<feature type="helix" evidence="22">
    <location>
        <begin position="708"/>
        <end position="710"/>
    </location>
</feature>
<feature type="helix" evidence="22">
    <location>
        <begin position="713"/>
        <end position="739"/>
    </location>
</feature>
<feature type="strand" evidence="22">
    <location>
        <begin position="745"/>
        <end position="748"/>
    </location>
</feature>
<feature type="strand" evidence="22">
    <location>
        <begin position="751"/>
        <end position="753"/>
    </location>
</feature>
<feature type="helix" evidence="22">
    <location>
        <begin position="755"/>
        <end position="760"/>
    </location>
</feature>
<feature type="helix" evidence="22">
    <location>
        <begin position="764"/>
        <end position="779"/>
    </location>
</feature>
<feature type="helix" evidence="22">
    <location>
        <begin position="784"/>
        <end position="795"/>
    </location>
</feature>
<feature type="strand" evidence="22">
    <location>
        <begin position="797"/>
        <end position="800"/>
    </location>
</feature>
<feature type="helix" evidence="22">
    <location>
        <begin position="807"/>
        <end position="826"/>
    </location>
</feature>
<feature type="strand" evidence="20">
    <location>
        <begin position="827"/>
        <end position="829"/>
    </location>
</feature>
<feature type="turn" evidence="21">
    <location>
        <begin position="832"/>
        <end position="834"/>
    </location>
</feature>
<feature type="helix" evidence="22">
    <location>
        <begin position="835"/>
        <end position="865"/>
    </location>
</feature>
<feature type="turn" evidence="22">
    <location>
        <begin position="866"/>
        <end position="871"/>
    </location>
</feature>
<feature type="helix" evidence="22">
    <location>
        <begin position="876"/>
        <end position="884"/>
    </location>
</feature>
<feature type="helix" evidence="22">
    <location>
        <begin position="886"/>
        <end position="890"/>
    </location>
</feature>
<feature type="strand" evidence="22">
    <location>
        <begin position="893"/>
        <end position="896"/>
    </location>
</feature>
<organism>
    <name type="scientific">Rattus norvegicus</name>
    <name type="common">Rat</name>
    <dbReference type="NCBI Taxonomy" id="10116"/>
    <lineage>
        <taxon>Eukaryota</taxon>
        <taxon>Metazoa</taxon>
        <taxon>Chordata</taxon>
        <taxon>Craniata</taxon>
        <taxon>Vertebrata</taxon>
        <taxon>Euteleostomi</taxon>
        <taxon>Mammalia</taxon>
        <taxon>Eutheria</taxon>
        <taxon>Euarchontoglires</taxon>
        <taxon>Glires</taxon>
        <taxon>Rodentia</taxon>
        <taxon>Myomorpha</taxon>
        <taxon>Muroidea</taxon>
        <taxon>Muridae</taxon>
        <taxon>Murinae</taxon>
        <taxon>Rattus</taxon>
    </lineage>
</organism>
<evidence type="ECO:0000250" key="1"/>
<evidence type="ECO:0000250" key="2">
    <source>
        <dbReference type="UniProtKB" id="P10275"/>
    </source>
</evidence>
<evidence type="ECO:0000250" key="3">
    <source>
        <dbReference type="UniProtKB" id="P19091"/>
    </source>
</evidence>
<evidence type="ECO:0000255" key="4">
    <source>
        <dbReference type="PROSITE-ProRule" id="PRU00407"/>
    </source>
</evidence>
<evidence type="ECO:0000255" key="5">
    <source>
        <dbReference type="PROSITE-ProRule" id="PRU01189"/>
    </source>
</evidence>
<evidence type="ECO:0000256" key="6">
    <source>
        <dbReference type="SAM" id="MobiDB-lite"/>
    </source>
</evidence>
<evidence type="ECO:0000269" key="7">
    <source>
    </source>
</evidence>
<evidence type="ECO:0000269" key="8">
    <source>
    </source>
</evidence>
<evidence type="ECO:0000269" key="9">
    <source>
    </source>
</evidence>
<evidence type="ECO:0000269" key="10">
    <source>
    </source>
</evidence>
<evidence type="ECO:0000269" key="11">
    <source>
    </source>
</evidence>
<evidence type="ECO:0000269" key="12">
    <source>
    </source>
</evidence>
<evidence type="ECO:0000269" key="13">
    <source>
    </source>
</evidence>
<evidence type="ECO:0000269" key="14">
    <source>
    </source>
</evidence>
<evidence type="ECO:0000305" key="15"/>
<evidence type="ECO:0007744" key="16">
    <source>
        <dbReference type="PDB" id="1I37"/>
    </source>
</evidence>
<evidence type="ECO:0007744" key="17">
    <source>
    </source>
</evidence>
<evidence type="ECO:0007829" key="18">
    <source>
        <dbReference type="PDB" id="1I37"/>
    </source>
</evidence>
<evidence type="ECO:0007829" key="19">
    <source>
        <dbReference type="PDB" id="1R4I"/>
    </source>
</evidence>
<evidence type="ECO:0007829" key="20">
    <source>
        <dbReference type="PDB" id="2IHQ"/>
    </source>
</evidence>
<evidence type="ECO:0007829" key="21">
    <source>
        <dbReference type="PDB" id="2NW4"/>
    </source>
</evidence>
<evidence type="ECO:0007829" key="22">
    <source>
        <dbReference type="PDB" id="7ZTV"/>
    </source>
</evidence>
<comment type="function">
    <text evidence="2 11 12">Steroid hormone receptors are ligand-activated transcription factors that regulate eukaryotic gene expression and affect cellular proliferation and differentiation in target tissues. Transcription factor activity is modulated by bound coactivator and corepressor proteins like ZBTB7A that recruits NCOR1 and NCOR2 to the androgen response elements/ARE on target genes, negatively regulating androgen receptor signaling and androgen-induced cell proliferation. Transcription activation is also down-regulated by NR0B2. Activated, but not phosphorylated, by HIPK3 and ZIPK/DAPK3 (By similarity).</text>
</comment>
<comment type="subunit">
    <text evidence="2 3 7 8 9 10 11 12 14">Binds DNA as a homodimer. Part of a ternary complex containing AR, EFCAB6/DJBP and PARK7. Interacts with HIPK3 and NR0B2 in the presence of androgen. The ligand binding domain interacts with KAT7/HBO1 in the presence of dihydrotestosterone. Interacts with EFCAB6/DJBP, PQBP1, RANBP9, RBAK, SPDEF, SRA1, TGFB1I1, ZNF318 and RREB1. Interacts with ZMIZ1/ZIMP10 and ZMIZ2/ZMIP7 which both enhance its transactivation activity. Interacts with SLC30A9 and RAD54L2/ARIP4. Interacts with MACROD1 (via macro domain) (By similarity). Interacts via the ligand-binding domain with LXXLL and FXXLF motifs from NCOA1, NCOA2, NCOA3 and MAGEA11. Interacts (via nuclear receptor DNA binding domain and nuclear receptor ligand binding domain) with NCOA4 (By similarity). The AR N-terminal poly-Gln region binds Ran resulting in enhancement of AR-mediated transactivation. Ran-binding decreases as the poly-Gln length increases. Interacts with HIP1 (via coiled coil domain). Interacts (via ligand-binding domain) with TRIM68. Interacts with TNK2. Interacts with USP26. Interacts with RNF6. Interacts (regulated by RNF6 probably through polyubiquitination) with RNF14; regulates AR transcriptional activity. Interacts with PRMT2 and TRIM24. Interacts with RACK1. Interacts with RANBP10; this interaction enhances dihydrotestosterone-induced AR transcriptional activity. Interacts with PRPF6 in a hormone-independent way; this interaction enhances dihydrotestosterone-induced AR transcriptional activity. Interacts with STK4/MST1. Interacts with ZIPK/DAPK3. Interacts with LPXN. Interacts with MAK. Part of a complex containing AR, MAK and NCOA3. Interacts with CRY1. Interacts with CCAR1 and GATA2 (By similarity). Interacts with BUD31 (By similarity). Interacts with ARID4A (By similarity). Interacts with ARID4B (By similarity). Interacts (via NR LBD domain) with ZBTB7A; the interaction is direct and androgen-dependent (By similarity). Interacts with NCOR1 (By similarity). Interacts with NCOR2 (By similarity). Interacts with CRY2 in a ligand-dependent manner (By similarity).</text>
</comment>
<comment type="subcellular location">
    <subcellularLocation>
        <location evidence="14">Nucleus</location>
    </subcellularLocation>
    <subcellularLocation>
        <location evidence="2">Cytoplasm</location>
    </subcellularLocation>
    <text evidence="2">Detected at the promoter of target genes. Predominantly cytoplasmic in unligated form but translocates to the nucleus upon ligand-binding. Can also translocate to the nucleus in unligated form in the presence of RACK1.</text>
</comment>
<comment type="tissue specificity">
    <text>Highest levels in the seminal vesicle, ventral prostate and coagulating gland with lower levels in the kidney and levator ani muscle.</text>
</comment>
<comment type="domain">
    <text evidence="1">Composed of three domains: a modulating N-terminal domain, a DNA-binding domain and a C-terminal ligand-binding domain. In the presence of bound steroid the ligand-binding domain interacts with the N-terminal modulating domain, and thereby activates AR transcription factor activity. Agonist binding is required for dimerization and binding to target DNA. The transcription factor activity of the complex formed by ligand-activated AR and DNA is modulated by interactions with coactivator and corepressor proteins. Interaction with RANBP9 is mediated by both the N-terminal domain and the DNA-binding domain. Interaction with EFCAB6/DJBP is mediated by the DNA-binding domain (By similarity).</text>
</comment>
<comment type="PTM">
    <text evidence="2">Phosphorylated in prostate cancer cells in response to several growth factors including EGF. Phosphorylation is induced by c-Src kinase (CSK). Tyr-517 is one of the major phosphorylation sites and an increase in phosphorylation and Src kinase activity is associated with prostate cancer progression (By similarity). Phosphorylation by TNK2 enhances the DNA-binding and transcriptional activity. Phosphorylation at Ser-61 by CDK9 regulates AR promoter selectivity and cell growth. Phosphorylation by PAK6 leads to AR-mediated transcription inhibition (By similarity).</text>
</comment>
<comment type="PTM">
    <text evidence="2">Sumoylated on Lys-384 (major) and Lys-503 (By similarity). Ubiquitinated. Deubiquitinated by USP26 (By similarity). 'Lys-6' and 'Lys-27'-linked polyubiquitination by RNF6 modulates AR transcriptional activity and specificity (By similarity).</text>
</comment>
<comment type="PTM">
    <text evidence="2">Palmitoylated by ZDHHC7 and ZDHHC21. Palmitoylation is required for plasma membrane targeting and for rapid intracellular signaling via ERK and AKT kinases and cAMP generation (By similarity).</text>
</comment>
<comment type="disease">
    <text evidence="13">Defects in Ar are a cause of androgen insensitivity. Rats with this syndrome are called testicular feminized (TFM).</text>
</comment>
<comment type="miscellaneous">
    <text>In the absence of ligand, steroid hormone receptors are thought to be weakly associated with nuclear components; hormone binding greatly increases receptor affinity. The hormone-receptor complex appears to recognize discrete DNA sequences upstream of transcriptional start sites.</text>
</comment>
<comment type="miscellaneous">
    <text>Transcriptional activity is enhanced by binding to RANBP9.</text>
</comment>
<comment type="similarity">
    <text evidence="15">Belongs to the nuclear hormone receptor family. NR3 subfamily.</text>
</comment>
<sequence>MEVQLGLGRVYPRPPSKTYRGAFQNLFQSVREAIQNPGPRHPEAASIAPPGACLQQRQETSPRRRRRQQHPEDGSPQAHIRGTTGYLALEEEQQPSQQQSASEGHPESGCLPEPGAATAPGKGLPQQPPAPPDQDDSAAPSTLSLLGPTFPGLSSCSADIKDILSEAGTMQLLQQQQQQQQQQQQQQQQQQQQQQEVISEGSSSVRAREATGAPSSSKDSYLGGNSTISDSAKELCKAVSVSMGLGVEALEHLSPGEQLRGDCMYASLLGGPPAVRPTPCAPLAECKGLSLDEGPGKGTEETAEYSSFKGGYAKGLEGESLGCSGSSEAGSSGTLEIPSSLSLYKSGAVDEAAAYQNRDYYNFPLALSGPPHPPPPTHPHARIKLENPSDYGSAWAAAAAQCRYGDLASLHGGSVAGPSTGSPPATASSSWHTLFTAEEGQLYGPGGGGGSSSPSDAGPVAPYGYTRPPQGLASQEGDFSASEVWYPGGVVNRVPYPSPSCVKSEMGPWMENYSGPYGDMRLDSTRDHVLPIDYYFPPQKTCLICGDEASGCHYGALTCGSCKVFFKRAAEGKQKYLCASRNDCTIDKFRRKNCPSCRLRKCYEAGMTLGARKLKKLGNLKLQEEGENSSAGSPTEDPSQKMTVSHIEGYECQPIFLNVLEAIEPGVVCAGHDNNQPDSFAALLSSLNELGERQLVHVVKWAKALPGFRNLHVDDQMAVIQYSWMGLMVFAMGWRSFTNVNSRMLYFAPDLVFNEYRMHKSRMYSQCVRMRHLSQEFGWLQITPQEFLCMKALLLFSIIPVDGLKNQKFFDELRMNYIKELDRIIACKRKNPTSCSRRFYQLTKLLDSVQPIARELHQFTFDLLIKSHMVSVDFPEMMAEIISVQVPKILSGKVKPIYFHTQ</sequence>
<dbReference type="EMBL" id="M20133">
    <property type="protein sequence ID" value="AAA40733.1"/>
    <property type="molecule type" value="mRNA"/>
</dbReference>
<dbReference type="EMBL" id="M23264">
    <property type="protein sequence ID" value="AAA40759.1"/>
    <property type="molecule type" value="mRNA"/>
</dbReference>
<dbReference type="EMBL" id="J05454">
    <property type="protein sequence ID" value="AAA40734.1"/>
    <property type="molecule type" value="Genomic_DNA"/>
</dbReference>
<dbReference type="PIR" id="B40494">
    <property type="entry name" value="B40494"/>
</dbReference>
<dbReference type="RefSeq" id="NP_036634.1">
    <property type="nucleotide sequence ID" value="NM_012502.1"/>
</dbReference>
<dbReference type="PDB" id="1I37">
    <property type="method" value="X-ray"/>
    <property type="resolution" value="2.00 A"/>
    <property type="chains" value="A=647-902"/>
</dbReference>
<dbReference type="PDB" id="1I38">
    <property type="method" value="X-ray"/>
    <property type="resolution" value="2.00 A"/>
    <property type="chains" value="A=647-902"/>
</dbReference>
<dbReference type="PDB" id="1R4I">
    <property type="method" value="X-ray"/>
    <property type="resolution" value="3.10 A"/>
    <property type="chains" value="A/B=533-637"/>
</dbReference>
<dbReference type="PDB" id="1XNN">
    <property type="method" value="X-ray"/>
    <property type="resolution" value="2.20 A"/>
    <property type="chains" value="A=647-902"/>
</dbReference>
<dbReference type="PDB" id="2IHQ">
    <property type="method" value="X-ray"/>
    <property type="resolution" value="2.00 A"/>
    <property type="chains" value="A=647-902"/>
</dbReference>
<dbReference type="PDB" id="2NW4">
    <property type="method" value="X-ray"/>
    <property type="resolution" value="3.00 A"/>
    <property type="chains" value="A=647-902"/>
</dbReference>
<dbReference type="PDB" id="3G0W">
    <property type="method" value="X-ray"/>
    <property type="resolution" value="1.95 A"/>
    <property type="chains" value="A=647-902"/>
</dbReference>
<dbReference type="PDB" id="7ZTV">
    <property type="method" value="X-ray"/>
    <property type="resolution" value="1.94 A"/>
    <property type="chains" value="A=654-902"/>
</dbReference>
<dbReference type="PDBsum" id="1I37"/>
<dbReference type="PDBsum" id="1I38"/>
<dbReference type="PDBsum" id="1R4I"/>
<dbReference type="PDBsum" id="1XNN"/>
<dbReference type="PDBsum" id="2IHQ"/>
<dbReference type="PDBsum" id="2NW4"/>
<dbReference type="PDBsum" id="3G0W"/>
<dbReference type="PDBsum" id="7ZTV"/>
<dbReference type="SMR" id="P15207"/>
<dbReference type="BioGRID" id="246396">
    <property type="interactions" value="4"/>
</dbReference>
<dbReference type="CORUM" id="P15207"/>
<dbReference type="DIP" id="DIP-5963N"/>
<dbReference type="FunCoup" id="P15207">
    <property type="interactions" value="462"/>
</dbReference>
<dbReference type="IntAct" id="P15207">
    <property type="interactions" value="1"/>
</dbReference>
<dbReference type="STRING" id="10116.ENSRNOP00000009129"/>
<dbReference type="BindingDB" id="P15207"/>
<dbReference type="ChEMBL" id="CHEMBL3072"/>
<dbReference type="DrugCentral" id="P15207"/>
<dbReference type="GuidetoPHARMACOLOGY" id="628"/>
<dbReference type="GlyGen" id="P15207">
    <property type="glycosylation" value="1 site"/>
</dbReference>
<dbReference type="iPTMnet" id="P15207"/>
<dbReference type="PhosphoSitePlus" id="P15207"/>
<dbReference type="PaxDb" id="10116-ENSRNOP00000009129"/>
<dbReference type="GeneID" id="24208"/>
<dbReference type="KEGG" id="rno:24208"/>
<dbReference type="AGR" id="RGD:2147"/>
<dbReference type="CTD" id="367"/>
<dbReference type="RGD" id="2147">
    <property type="gene designation" value="Ar"/>
</dbReference>
<dbReference type="eggNOG" id="KOG3575">
    <property type="taxonomic scope" value="Eukaryota"/>
</dbReference>
<dbReference type="InParanoid" id="P15207"/>
<dbReference type="PhylomeDB" id="P15207"/>
<dbReference type="TreeFam" id="TF350286"/>
<dbReference type="Reactome" id="R-RNO-3371497">
    <property type="pathway name" value="HSP90 chaperone cycle for steroid hormone receptors (SHR) in the presence of ligand"/>
</dbReference>
<dbReference type="Reactome" id="R-RNO-383280">
    <property type="pathway name" value="Nuclear Receptor transcription pathway"/>
</dbReference>
<dbReference type="Reactome" id="R-RNO-4090294">
    <property type="pathway name" value="SUMOylation of intracellular receptors"/>
</dbReference>
<dbReference type="Reactome" id="R-RNO-5625886">
    <property type="pathway name" value="Activated PKN1 stimulates transcription of AR (androgen receptor) regulated genes KLK2 and KLK3"/>
</dbReference>
<dbReference type="Reactome" id="R-RNO-5689880">
    <property type="pathway name" value="Ub-specific processing proteases"/>
</dbReference>
<dbReference type="EvolutionaryTrace" id="P15207"/>
<dbReference type="PRO" id="PR:P15207"/>
<dbReference type="Proteomes" id="UP000002494">
    <property type="component" value="Unplaced"/>
</dbReference>
<dbReference type="GO" id="GO:0030424">
    <property type="term" value="C:axon"/>
    <property type="evidence" value="ECO:0000314"/>
    <property type="project" value="RGD"/>
</dbReference>
<dbReference type="GO" id="GO:0000785">
    <property type="term" value="C:chromatin"/>
    <property type="evidence" value="ECO:0000250"/>
    <property type="project" value="UniProtKB"/>
</dbReference>
<dbReference type="GO" id="GO:0005737">
    <property type="term" value="C:cytoplasm"/>
    <property type="evidence" value="ECO:0000250"/>
    <property type="project" value="UniProtKB"/>
</dbReference>
<dbReference type="GO" id="GO:0005829">
    <property type="term" value="C:cytosol"/>
    <property type="evidence" value="ECO:0000314"/>
    <property type="project" value="RGD"/>
</dbReference>
<dbReference type="GO" id="GO:0030425">
    <property type="term" value="C:dendrite"/>
    <property type="evidence" value="ECO:0000314"/>
    <property type="project" value="RGD"/>
</dbReference>
<dbReference type="GO" id="GO:0016363">
    <property type="term" value="C:nuclear matrix"/>
    <property type="evidence" value="ECO:0000314"/>
    <property type="project" value="RGD"/>
</dbReference>
<dbReference type="GO" id="GO:0016607">
    <property type="term" value="C:nuclear speck"/>
    <property type="evidence" value="ECO:0000266"/>
    <property type="project" value="RGD"/>
</dbReference>
<dbReference type="GO" id="GO:0005634">
    <property type="term" value="C:nucleus"/>
    <property type="evidence" value="ECO:0000314"/>
    <property type="project" value="RGD"/>
</dbReference>
<dbReference type="GO" id="GO:0005886">
    <property type="term" value="C:plasma membrane"/>
    <property type="evidence" value="ECO:0000266"/>
    <property type="project" value="RGD"/>
</dbReference>
<dbReference type="GO" id="GO:0032991">
    <property type="term" value="C:protein-containing complex"/>
    <property type="evidence" value="ECO:0000266"/>
    <property type="project" value="RGD"/>
</dbReference>
<dbReference type="GO" id="GO:0005497">
    <property type="term" value="F:androgen binding"/>
    <property type="evidence" value="ECO:0000315"/>
    <property type="project" value="RGD"/>
</dbReference>
<dbReference type="GO" id="GO:0051117">
    <property type="term" value="F:ATPase binding"/>
    <property type="evidence" value="ECO:0000266"/>
    <property type="project" value="RGD"/>
</dbReference>
<dbReference type="GO" id="GO:0008013">
    <property type="term" value="F:beta-catenin binding"/>
    <property type="evidence" value="ECO:0000250"/>
    <property type="project" value="UniProtKB"/>
</dbReference>
<dbReference type="GO" id="GO:0003682">
    <property type="term" value="F:chromatin binding"/>
    <property type="evidence" value="ECO:0000314"/>
    <property type="project" value="RGD"/>
</dbReference>
<dbReference type="GO" id="GO:0003677">
    <property type="term" value="F:DNA binding"/>
    <property type="evidence" value="ECO:0000304"/>
    <property type="project" value="RGD"/>
</dbReference>
<dbReference type="GO" id="GO:0001228">
    <property type="term" value="F:DNA-binding transcription activator activity, RNA polymerase II-specific"/>
    <property type="evidence" value="ECO:0000266"/>
    <property type="project" value="RGD"/>
</dbReference>
<dbReference type="GO" id="GO:0003700">
    <property type="term" value="F:DNA-binding transcription factor activity"/>
    <property type="evidence" value="ECO:0000250"/>
    <property type="project" value="UniProtKB"/>
</dbReference>
<dbReference type="GO" id="GO:0019899">
    <property type="term" value="F:enzyme binding"/>
    <property type="evidence" value="ECO:0000266"/>
    <property type="project" value="RGD"/>
</dbReference>
<dbReference type="GO" id="GO:0034056">
    <property type="term" value="F:estrogen response element binding"/>
    <property type="evidence" value="ECO:0000318"/>
    <property type="project" value="GO_Central"/>
</dbReference>
<dbReference type="GO" id="GO:0060090">
    <property type="term" value="F:molecular adaptor activity"/>
    <property type="evidence" value="ECO:0000266"/>
    <property type="project" value="RGD"/>
</dbReference>
<dbReference type="GO" id="GO:0140693">
    <property type="term" value="F:molecular condensate scaffold activity"/>
    <property type="evidence" value="ECO:0000266"/>
    <property type="project" value="RGD"/>
</dbReference>
<dbReference type="GO" id="GO:0050681">
    <property type="term" value="F:nuclear androgen receptor binding"/>
    <property type="evidence" value="ECO:0000353"/>
    <property type="project" value="RGD"/>
</dbReference>
<dbReference type="GO" id="GO:0004879">
    <property type="term" value="F:nuclear receptor activity"/>
    <property type="evidence" value="ECO:0000314"/>
    <property type="project" value="RGD"/>
</dbReference>
<dbReference type="GO" id="GO:0070974">
    <property type="term" value="F:POU domain binding"/>
    <property type="evidence" value="ECO:0000266"/>
    <property type="project" value="RGD"/>
</dbReference>
<dbReference type="GO" id="GO:0019904">
    <property type="term" value="F:protein domain specific binding"/>
    <property type="evidence" value="ECO:0000353"/>
    <property type="project" value="RGD"/>
</dbReference>
<dbReference type="GO" id="GO:0032553">
    <property type="term" value="F:ribonucleotide binding"/>
    <property type="evidence" value="ECO:0000314"/>
    <property type="project" value="RGD"/>
</dbReference>
<dbReference type="GO" id="GO:0000978">
    <property type="term" value="F:RNA polymerase II cis-regulatory region sequence-specific DNA binding"/>
    <property type="evidence" value="ECO:0000266"/>
    <property type="project" value="RGD"/>
</dbReference>
<dbReference type="GO" id="GO:0000979">
    <property type="term" value="F:RNA polymerase II core promoter sequence-specific DNA binding"/>
    <property type="evidence" value="ECO:0000266"/>
    <property type="project" value="RGD"/>
</dbReference>
<dbReference type="GO" id="GO:0001091">
    <property type="term" value="F:RNA polymerase II general transcription initiation factor binding"/>
    <property type="evidence" value="ECO:0000266"/>
    <property type="project" value="RGD"/>
</dbReference>
<dbReference type="GO" id="GO:0061629">
    <property type="term" value="F:RNA polymerase II-specific DNA-binding transcription factor binding"/>
    <property type="evidence" value="ECO:0000266"/>
    <property type="project" value="RGD"/>
</dbReference>
<dbReference type="GO" id="GO:0043565">
    <property type="term" value="F:sequence-specific DNA binding"/>
    <property type="evidence" value="ECO:0000314"/>
    <property type="project" value="RGD"/>
</dbReference>
<dbReference type="GO" id="GO:0005102">
    <property type="term" value="F:signaling receptor binding"/>
    <property type="evidence" value="ECO:0000353"/>
    <property type="project" value="UniProtKB"/>
</dbReference>
<dbReference type="GO" id="GO:0005496">
    <property type="term" value="F:steroid binding"/>
    <property type="evidence" value="ECO:0007669"/>
    <property type="project" value="UniProtKB-KW"/>
</dbReference>
<dbReference type="GO" id="GO:0000976">
    <property type="term" value="F:transcription cis-regulatory region binding"/>
    <property type="evidence" value="ECO:0000250"/>
    <property type="project" value="UniProtKB"/>
</dbReference>
<dbReference type="GO" id="GO:0001223">
    <property type="term" value="F:transcription coactivator binding"/>
    <property type="evidence" value="ECO:0000266"/>
    <property type="project" value="RGD"/>
</dbReference>
<dbReference type="GO" id="GO:0008270">
    <property type="term" value="F:zinc ion binding"/>
    <property type="evidence" value="ECO:0007669"/>
    <property type="project" value="UniProtKB-KW"/>
</dbReference>
<dbReference type="GO" id="GO:0030521">
    <property type="term" value="P:androgen receptor signaling pathway"/>
    <property type="evidence" value="ECO:0000315"/>
    <property type="project" value="RGD"/>
</dbReference>
<dbReference type="GO" id="GO:0048645">
    <property type="term" value="P:animal organ formation"/>
    <property type="evidence" value="ECO:0000266"/>
    <property type="project" value="RGD"/>
</dbReference>
<dbReference type="GO" id="GO:0071391">
    <property type="term" value="P:cellular response to estrogen stimulus"/>
    <property type="evidence" value="ECO:0000266"/>
    <property type="project" value="RGD"/>
</dbReference>
<dbReference type="GO" id="GO:0071372">
    <property type="term" value="P:cellular response to follicle-stimulating hormone stimulus"/>
    <property type="evidence" value="ECO:0000270"/>
    <property type="project" value="RGD"/>
</dbReference>
<dbReference type="GO" id="GO:0071383">
    <property type="term" value="P:cellular response to steroid hormone stimulus"/>
    <property type="evidence" value="ECO:0000270"/>
    <property type="project" value="RGD"/>
</dbReference>
<dbReference type="GO" id="GO:0071394">
    <property type="term" value="P:cellular response to testosterone stimulus"/>
    <property type="evidence" value="ECO:0000266"/>
    <property type="project" value="RGD"/>
</dbReference>
<dbReference type="GO" id="GO:0007620">
    <property type="term" value="P:copulation"/>
    <property type="evidence" value="ECO:0000315"/>
    <property type="project" value="RGD"/>
</dbReference>
<dbReference type="GO" id="GO:0042756">
    <property type="term" value="P:drinking behavior"/>
    <property type="evidence" value="ECO:0000315"/>
    <property type="project" value="RGD"/>
</dbReference>
<dbReference type="GO" id="GO:0060742">
    <property type="term" value="P:epithelial cell differentiation involved in prostate gland development"/>
    <property type="evidence" value="ECO:0000266"/>
    <property type="project" value="RGD"/>
</dbReference>
<dbReference type="GO" id="GO:0003382">
    <property type="term" value="P:epithelial cell morphogenesis"/>
    <property type="evidence" value="ECO:0000266"/>
    <property type="project" value="RGD"/>
</dbReference>
<dbReference type="GO" id="GO:0050673">
    <property type="term" value="P:epithelial cell proliferation"/>
    <property type="evidence" value="ECO:0000266"/>
    <property type="project" value="RGD"/>
</dbReference>
<dbReference type="GO" id="GO:0030520">
    <property type="term" value="P:estrogen receptor signaling pathway"/>
    <property type="evidence" value="ECO:0000266"/>
    <property type="project" value="RGD"/>
</dbReference>
<dbReference type="GO" id="GO:0009566">
    <property type="term" value="P:fertilization"/>
    <property type="evidence" value="ECO:0000266"/>
    <property type="project" value="RGD"/>
</dbReference>
<dbReference type="GO" id="GO:0010467">
    <property type="term" value="P:gene expression"/>
    <property type="evidence" value="ECO:0000266"/>
    <property type="project" value="RGD"/>
</dbReference>
<dbReference type="GO" id="GO:0001701">
    <property type="term" value="P:in utero embryonic development"/>
    <property type="evidence" value="ECO:0000266"/>
    <property type="project" value="RGD"/>
</dbReference>
<dbReference type="GO" id="GO:0048009">
    <property type="term" value="P:insulin-like growth factor receptor signaling pathway"/>
    <property type="evidence" value="ECO:0000266"/>
    <property type="project" value="RGD"/>
</dbReference>
<dbReference type="GO" id="GO:0030522">
    <property type="term" value="P:intracellular receptor signaling pathway"/>
    <property type="evidence" value="ECO:0000250"/>
    <property type="project" value="UniProtKB"/>
</dbReference>
<dbReference type="GO" id="GO:0060599">
    <property type="term" value="P:lateral sprouting involved in mammary gland duct morphogenesis"/>
    <property type="evidence" value="ECO:0000266"/>
    <property type="project" value="RGD"/>
</dbReference>
<dbReference type="GO" id="GO:0033327">
    <property type="term" value="P:Leydig cell differentiation"/>
    <property type="evidence" value="ECO:0000266"/>
    <property type="project" value="RGD"/>
</dbReference>
<dbReference type="GO" id="GO:0097421">
    <property type="term" value="P:liver regeneration"/>
    <property type="evidence" value="ECO:0000270"/>
    <property type="project" value="RGD"/>
</dbReference>
<dbReference type="GO" id="GO:0040011">
    <property type="term" value="P:locomotion"/>
    <property type="evidence" value="ECO:0000315"/>
    <property type="project" value="RGD"/>
</dbReference>
<dbReference type="GO" id="GO:0008049">
    <property type="term" value="P:male courtship behavior"/>
    <property type="evidence" value="ECO:0000315"/>
    <property type="project" value="RGD"/>
</dbReference>
<dbReference type="GO" id="GO:0048808">
    <property type="term" value="P:male genitalia morphogenesis"/>
    <property type="evidence" value="ECO:0000266"/>
    <property type="project" value="RGD"/>
</dbReference>
<dbReference type="GO" id="GO:0008584">
    <property type="term" value="P:male gonad development"/>
    <property type="evidence" value="ECO:0000266"/>
    <property type="project" value="RGD"/>
</dbReference>
<dbReference type="GO" id="GO:0046661">
    <property type="term" value="P:male sex differentiation"/>
    <property type="evidence" value="ECO:0000315"/>
    <property type="project" value="RGD"/>
</dbReference>
<dbReference type="GO" id="GO:0019102">
    <property type="term" value="P:male somatic sex determination"/>
    <property type="evidence" value="ECO:0000266"/>
    <property type="project" value="RGD"/>
</dbReference>
<dbReference type="GO" id="GO:0060749">
    <property type="term" value="P:mammary gland alveolus development"/>
    <property type="evidence" value="ECO:0000266"/>
    <property type="project" value="RGD"/>
</dbReference>
<dbReference type="GO" id="GO:0000165">
    <property type="term" value="P:MAPK cascade"/>
    <property type="evidence" value="ECO:0000266"/>
    <property type="project" value="RGD"/>
</dbReference>
<dbReference type="GO" id="GO:0140694">
    <property type="term" value="P:membraneless organelle assembly"/>
    <property type="evidence" value="ECO:0000266"/>
    <property type="project" value="RGD"/>
</dbReference>
<dbReference type="GO" id="GO:0060571">
    <property type="term" value="P:morphogenesis of an epithelial fold"/>
    <property type="evidence" value="ECO:0000266"/>
    <property type="project" value="RGD"/>
</dbReference>
<dbReference type="GO" id="GO:0035264">
    <property type="term" value="P:multicellular organism growth"/>
    <property type="evidence" value="ECO:0000266"/>
    <property type="project" value="RGD"/>
</dbReference>
<dbReference type="GO" id="GO:0008285">
    <property type="term" value="P:negative regulation of cell population proliferation"/>
    <property type="evidence" value="ECO:0000266"/>
    <property type="project" value="RGD"/>
</dbReference>
<dbReference type="GO" id="GO:0045892">
    <property type="term" value="P:negative regulation of DNA-templated transcription"/>
    <property type="evidence" value="ECO:0000314"/>
    <property type="project" value="RGD"/>
</dbReference>
<dbReference type="GO" id="GO:0050680">
    <property type="term" value="P:negative regulation of epithelial cell proliferation"/>
    <property type="evidence" value="ECO:0000266"/>
    <property type="project" value="RGD"/>
</dbReference>
<dbReference type="GO" id="GO:2001237">
    <property type="term" value="P:negative regulation of extrinsic apoptotic signaling pathway"/>
    <property type="evidence" value="ECO:0000250"/>
    <property type="project" value="UniProtKB"/>
</dbReference>
<dbReference type="GO" id="GO:0045720">
    <property type="term" value="P:negative regulation of integrin biosynthetic process"/>
    <property type="evidence" value="ECO:0000266"/>
    <property type="project" value="RGD"/>
</dbReference>
<dbReference type="GO" id="GO:0000122">
    <property type="term" value="P:negative regulation of transcription by RNA polymerase II"/>
    <property type="evidence" value="ECO:0000266"/>
    <property type="project" value="RGD"/>
</dbReference>
<dbReference type="GO" id="GO:0030518">
    <property type="term" value="P:nuclear receptor-mediated steroid hormone signaling pathway"/>
    <property type="evidence" value="ECO:0000318"/>
    <property type="project" value="GO_Central"/>
</dbReference>
<dbReference type="GO" id="GO:0045597">
    <property type="term" value="P:positive regulation of cell differentiation"/>
    <property type="evidence" value="ECO:0000266"/>
    <property type="project" value="RGD"/>
</dbReference>
<dbReference type="GO" id="GO:0008284">
    <property type="term" value="P:positive regulation of cell population proliferation"/>
    <property type="evidence" value="ECO:0000250"/>
    <property type="project" value="UniProtKB"/>
</dbReference>
<dbReference type="GO" id="GO:0045893">
    <property type="term" value="P:positive regulation of DNA-templated transcription"/>
    <property type="evidence" value="ECO:0000314"/>
    <property type="project" value="RGD"/>
</dbReference>
<dbReference type="GO" id="GO:0060769">
    <property type="term" value="P:positive regulation of epithelial cell proliferation involved in prostate gland development"/>
    <property type="evidence" value="ECO:0000266"/>
    <property type="project" value="RGD"/>
</dbReference>
<dbReference type="GO" id="GO:0010628">
    <property type="term" value="P:positive regulation of gene expression"/>
    <property type="evidence" value="ECO:0000266"/>
    <property type="project" value="RGD"/>
</dbReference>
<dbReference type="GO" id="GO:0110090">
    <property type="term" value="P:positive regulation of hippocampal neuron apoptotic process"/>
    <property type="evidence" value="ECO:0000315"/>
    <property type="project" value="RGD"/>
</dbReference>
<dbReference type="GO" id="GO:0043568">
    <property type="term" value="P:positive regulation of insulin-like growth factor receptor signaling pathway"/>
    <property type="evidence" value="ECO:0000266"/>
    <property type="project" value="RGD"/>
</dbReference>
<dbReference type="GO" id="GO:0045726">
    <property type="term" value="P:positive regulation of integrin biosynthetic process"/>
    <property type="evidence" value="ECO:0000266"/>
    <property type="project" value="RGD"/>
</dbReference>
<dbReference type="GO" id="GO:0033148">
    <property type="term" value="P:positive regulation of intracellular estrogen receptor signaling pathway"/>
    <property type="evidence" value="ECO:0000266"/>
    <property type="project" value="RGD"/>
</dbReference>
<dbReference type="GO" id="GO:0040017">
    <property type="term" value="P:positive regulation of locomotion"/>
    <property type="evidence" value="ECO:0000315"/>
    <property type="project" value="RGD"/>
</dbReference>
<dbReference type="GO" id="GO:0043410">
    <property type="term" value="P:positive regulation of MAPK cascade"/>
    <property type="evidence" value="ECO:0000266"/>
    <property type="project" value="RGD"/>
</dbReference>
<dbReference type="GO" id="GO:1902895">
    <property type="term" value="P:positive regulation of miRNA transcription"/>
    <property type="evidence" value="ECO:0000266"/>
    <property type="project" value="RGD"/>
</dbReference>
<dbReference type="GO" id="GO:0060406">
    <property type="term" value="P:positive regulation of penile erection"/>
    <property type="evidence" value="ECO:0000315"/>
    <property type="project" value="RGD"/>
</dbReference>
<dbReference type="GO" id="GO:0042327">
    <property type="term" value="P:positive regulation of phosphorylation"/>
    <property type="evidence" value="ECO:0000266"/>
    <property type="project" value="RGD"/>
</dbReference>
<dbReference type="GO" id="GO:0045944">
    <property type="term" value="P:positive regulation of transcription by RNA polymerase II"/>
    <property type="evidence" value="ECO:0000250"/>
    <property type="project" value="UniProtKB"/>
</dbReference>
<dbReference type="GO" id="GO:0045945">
    <property type="term" value="P:positive regulation of transcription by RNA polymerase III"/>
    <property type="evidence" value="ECO:0000266"/>
    <property type="project" value="RGD"/>
</dbReference>
<dbReference type="GO" id="GO:0060740">
    <property type="term" value="P:prostate gland epithelium morphogenesis"/>
    <property type="evidence" value="ECO:0000266"/>
    <property type="project" value="RGD"/>
</dbReference>
<dbReference type="GO" id="GO:0060736">
    <property type="term" value="P:prostate gland growth"/>
    <property type="evidence" value="ECO:0000270"/>
    <property type="project" value="RGD"/>
</dbReference>
<dbReference type="GO" id="GO:0060514">
    <property type="term" value="P:prostate induction"/>
    <property type="evidence" value="ECO:0000266"/>
    <property type="project" value="RGD"/>
</dbReference>
<dbReference type="GO" id="GO:0048638">
    <property type="term" value="P:regulation of developmental growth"/>
    <property type="evidence" value="ECO:0000266"/>
    <property type="project" value="RGD"/>
</dbReference>
<dbReference type="GO" id="GO:0006355">
    <property type="term" value="P:regulation of DNA-templated transcription"/>
    <property type="evidence" value="ECO:0000266"/>
    <property type="project" value="RGD"/>
</dbReference>
<dbReference type="GO" id="GO:0010468">
    <property type="term" value="P:regulation of gene expression"/>
    <property type="evidence" value="ECO:0000266"/>
    <property type="project" value="RGD"/>
</dbReference>
<dbReference type="GO" id="GO:0060685">
    <property type="term" value="P:regulation of prostatic bud formation"/>
    <property type="evidence" value="ECO:0000266"/>
    <property type="project" value="RGD"/>
</dbReference>
<dbReference type="GO" id="GO:1903076">
    <property type="term" value="P:regulation of protein localization to plasma membrane"/>
    <property type="evidence" value="ECO:0000250"/>
    <property type="project" value="UniProtKB"/>
</dbReference>
<dbReference type="GO" id="GO:0003073">
    <property type="term" value="P:regulation of systemic arterial blood pressure"/>
    <property type="evidence" value="ECO:0000266"/>
    <property type="project" value="RGD"/>
</dbReference>
<dbReference type="GO" id="GO:0006357">
    <property type="term" value="P:regulation of transcription by RNA polymerase II"/>
    <property type="evidence" value="ECO:0000266"/>
    <property type="project" value="RGD"/>
</dbReference>
<dbReference type="GO" id="GO:0019098">
    <property type="term" value="P:reproductive behavior"/>
    <property type="evidence" value="ECO:0000314"/>
    <property type="project" value="RGD"/>
</dbReference>
<dbReference type="GO" id="GO:0048608">
    <property type="term" value="P:reproductive structure development"/>
    <property type="evidence" value="ECO:0000266"/>
    <property type="project" value="RGD"/>
</dbReference>
<dbReference type="GO" id="GO:0061458">
    <property type="term" value="P:reproductive system development"/>
    <property type="evidence" value="ECO:0000266"/>
    <property type="project" value="RGD"/>
</dbReference>
<dbReference type="GO" id="GO:0090648">
    <property type="term" value="P:response to environmental enrichment"/>
    <property type="evidence" value="ECO:0000315"/>
    <property type="project" value="RGD"/>
</dbReference>
<dbReference type="GO" id="GO:0032355">
    <property type="term" value="P:response to estradiol"/>
    <property type="evidence" value="ECO:0000270"/>
    <property type="project" value="RGD"/>
</dbReference>
<dbReference type="GO" id="GO:0045471">
    <property type="term" value="P:response to ethanol"/>
    <property type="evidence" value="ECO:0000314"/>
    <property type="project" value="RGD"/>
</dbReference>
<dbReference type="GO" id="GO:0032868">
    <property type="term" value="P:response to insulin"/>
    <property type="evidence" value="ECO:0000270"/>
    <property type="project" value="RGD"/>
</dbReference>
<dbReference type="GO" id="GO:0014850">
    <property type="term" value="P:response to muscle activity"/>
    <property type="evidence" value="ECO:0000270"/>
    <property type="project" value="RGD"/>
</dbReference>
<dbReference type="GO" id="GO:0035094">
    <property type="term" value="P:response to nicotine"/>
    <property type="evidence" value="ECO:0000270"/>
    <property type="project" value="RGD"/>
</dbReference>
<dbReference type="GO" id="GO:0048545">
    <property type="term" value="P:response to steroid hormone"/>
    <property type="evidence" value="ECO:0000270"/>
    <property type="project" value="RGD"/>
</dbReference>
<dbReference type="GO" id="GO:0033574">
    <property type="term" value="P:response to testosterone"/>
    <property type="evidence" value="ECO:0000270"/>
    <property type="project" value="RGD"/>
</dbReference>
<dbReference type="GO" id="GO:0072520">
    <property type="term" value="P:seminiferous tubule development"/>
    <property type="evidence" value="ECO:0000266"/>
    <property type="project" value="RGD"/>
</dbReference>
<dbReference type="GO" id="GO:0007338">
    <property type="term" value="P:single fertilization"/>
    <property type="evidence" value="ECO:0000266"/>
    <property type="project" value="RGD"/>
</dbReference>
<dbReference type="GO" id="GO:0014734">
    <property type="term" value="P:skeletal muscle hypertrophy"/>
    <property type="evidence" value="ECO:0000315"/>
    <property type="project" value="RGD"/>
</dbReference>
<dbReference type="GO" id="GO:0007283">
    <property type="term" value="P:spermatogenesis"/>
    <property type="evidence" value="ECO:0000315"/>
    <property type="project" value="RGD"/>
</dbReference>
<dbReference type="GO" id="GO:0060748">
    <property type="term" value="P:tertiary branching involved in mammary gland duct morphogenesis"/>
    <property type="evidence" value="ECO:0000266"/>
    <property type="project" value="RGD"/>
</dbReference>
<dbReference type="GO" id="GO:0006366">
    <property type="term" value="P:transcription by RNA polymerase II"/>
    <property type="evidence" value="ECO:0000266"/>
    <property type="project" value="RGD"/>
</dbReference>
<dbReference type="CDD" id="cd07173">
    <property type="entry name" value="NR_DBD_AR"/>
    <property type="match status" value="1"/>
</dbReference>
<dbReference type="CDD" id="cd07073">
    <property type="entry name" value="NR_LBD_AR"/>
    <property type="match status" value="1"/>
</dbReference>
<dbReference type="FunFam" id="3.30.50.10:FF:000024">
    <property type="entry name" value="Androgen receptor"/>
    <property type="match status" value="1"/>
</dbReference>
<dbReference type="FunFam" id="1.10.565.10:FF:000004">
    <property type="entry name" value="Androgen receptor variant"/>
    <property type="match status" value="1"/>
</dbReference>
<dbReference type="Gene3D" id="3.30.50.10">
    <property type="entry name" value="Erythroid Transcription Factor GATA-1, subunit A"/>
    <property type="match status" value="1"/>
</dbReference>
<dbReference type="Gene3D" id="1.10.565.10">
    <property type="entry name" value="Retinoid X Receptor"/>
    <property type="match status" value="1"/>
</dbReference>
<dbReference type="InterPro" id="IPR001103">
    <property type="entry name" value="Andrgn_rcpt"/>
</dbReference>
<dbReference type="InterPro" id="IPR035500">
    <property type="entry name" value="NHR-like_dom_sf"/>
</dbReference>
<dbReference type="InterPro" id="IPR000536">
    <property type="entry name" value="Nucl_hrmn_rcpt_lig-bd"/>
</dbReference>
<dbReference type="InterPro" id="IPR050200">
    <property type="entry name" value="Nuclear_hormone_rcpt_NR3"/>
</dbReference>
<dbReference type="InterPro" id="IPR001628">
    <property type="entry name" value="Znf_hrmn_rcpt"/>
</dbReference>
<dbReference type="InterPro" id="IPR013088">
    <property type="entry name" value="Znf_NHR/GATA"/>
</dbReference>
<dbReference type="PANTHER" id="PTHR48092">
    <property type="entry name" value="KNIRPS-RELATED PROTEIN-RELATED"/>
    <property type="match status" value="1"/>
</dbReference>
<dbReference type="Pfam" id="PF02166">
    <property type="entry name" value="Androgen_recep"/>
    <property type="match status" value="1"/>
</dbReference>
<dbReference type="Pfam" id="PF00104">
    <property type="entry name" value="Hormone_recep"/>
    <property type="match status" value="1"/>
</dbReference>
<dbReference type="Pfam" id="PF00105">
    <property type="entry name" value="zf-C4"/>
    <property type="match status" value="1"/>
</dbReference>
<dbReference type="PRINTS" id="PR00521">
    <property type="entry name" value="ANDROGENR"/>
</dbReference>
<dbReference type="PRINTS" id="PR00047">
    <property type="entry name" value="STROIDFINGER"/>
</dbReference>
<dbReference type="SMART" id="SM00430">
    <property type="entry name" value="HOLI"/>
    <property type="match status" value="1"/>
</dbReference>
<dbReference type="SMART" id="SM00399">
    <property type="entry name" value="ZnF_C4"/>
    <property type="match status" value="1"/>
</dbReference>
<dbReference type="SUPFAM" id="SSF57716">
    <property type="entry name" value="Glucocorticoid receptor-like (DNA-binding domain)"/>
    <property type="match status" value="1"/>
</dbReference>
<dbReference type="SUPFAM" id="SSF48508">
    <property type="entry name" value="Nuclear receptor ligand-binding domain"/>
    <property type="match status" value="1"/>
</dbReference>
<dbReference type="PROSITE" id="PS51843">
    <property type="entry name" value="NR_LBD"/>
    <property type="match status" value="1"/>
</dbReference>
<dbReference type="PROSITE" id="PS00031">
    <property type="entry name" value="NUCLEAR_REC_DBD_1"/>
    <property type="match status" value="1"/>
</dbReference>
<dbReference type="PROSITE" id="PS51030">
    <property type="entry name" value="NUCLEAR_REC_DBD_2"/>
    <property type="match status" value="1"/>
</dbReference>
<gene>
    <name type="primary">Ar</name>
    <name type="synonym">Nr3c4</name>
</gene>
<accession>P15207</accession>
<accession>Q63049</accession>
<name>ANDR_RAT</name>
<keyword id="KW-0002">3D-structure</keyword>
<keyword id="KW-0963">Cytoplasm</keyword>
<keyword id="KW-0225">Disease variant</keyword>
<keyword id="KW-0238">DNA-binding</keyword>
<keyword id="KW-1017">Isopeptide bond</keyword>
<keyword id="KW-0446">Lipid-binding</keyword>
<keyword id="KW-0449">Lipoprotein</keyword>
<keyword id="KW-0479">Metal-binding</keyword>
<keyword id="KW-0539">Nucleus</keyword>
<keyword id="KW-0564">Palmitate</keyword>
<keyword id="KW-0597">Phosphoprotein</keyword>
<keyword id="KW-0675">Receptor</keyword>
<keyword id="KW-1185">Reference proteome</keyword>
<keyword id="KW-0754">Steroid-binding</keyword>
<keyword id="KW-0804">Transcription</keyword>
<keyword id="KW-0805">Transcription regulation</keyword>
<keyword id="KW-0832">Ubl conjugation</keyword>
<keyword id="KW-0862">Zinc</keyword>
<keyword id="KW-0863">Zinc-finger</keyword>